<reference key="1">
    <citation type="journal article" date="2003" name="Science">
        <title>Characterization of mammalian selenoproteomes.</title>
        <authorList>
            <person name="Kryukov G.V."/>
            <person name="Castellano S."/>
            <person name="Novoselov S.V."/>
            <person name="Lobanov A.V."/>
            <person name="Zehtab O."/>
            <person name="Guigo R."/>
            <person name="Gladyshev V.N."/>
        </authorList>
    </citation>
    <scope>NUCLEOTIDE SEQUENCE [MRNA]</scope>
    <scope>SELENOCYSTEINE</scope>
</reference>
<reference key="2">
    <citation type="journal article" date="2000" name="DNA Res.">
        <title>Prediction of the coding sequences of unidentified human genes. XIX. The complete sequences of 100 new cDNA clones from brain which code for large proteins in vitro.</title>
        <authorList>
            <person name="Nagase T."/>
            <person name="Kikuno R."/>
            <person name="Hattori A."/>
            <person name="Kondo Y."/>
            <person name="Okumura K."/>
            <person name="Ohara O."/>
        </authorList>
    </citation>
    <scope>NUCLEOTIDE SEQUENCE [LARGE SCALE MRNA]</scope>
    <source>
        <tissue>Brain</tissue>
    </source>
</reference>
<reference key="3">
    <citation type="journal article" date="2007" name="J. Lipid Res.">
        <title>Identification and characterization of human ethanolaminephosphotransferase1.</title>
        <authorList>
            <person name="Horibata Y."/>
            <person name="Hirabayashi Y."/>
        </authorList>
    </citation>
    <scope>FUNCTION</scope>
    <scope>BIOPHYSICOCHEMICAL PROPERTIES</scope>
    <scope>CATALYTIC ACTIVITY</scope>
    <scope>COFACTOR</scope>
    <scope>SUBCELLULAR LOCATION</scope>
    <scope>TISSUE SPECIFICITY</scope>
</reference>
<reference key="4">
    <citation type="journal article" date="2009" name="Anal. Chem.">
        <title>Lys-N and trypsin cover complementary parts of the phosphoproteome in a refined SCX-based approach.</title>
        <authorList>
            <person name="Gauci S."/>
            <person name="Helbig A.O."/>
            <person name="Slijper M."/>
            <person name="Krijgsveld J."/>
            <person name="Heck A.J."/>
            <person name="Mohammed S."/>
        </authorList>
    </citation>
    <scope>ACETYLATION [LARGE SCALE ANALYSIS] AT ALA-2</scope>
    <scope>CLEAVAGE OF INITIATOR METHIONINE [LARGE SCALE ANALYSIS]</scope>
    <scope>IDENTIFICATION BY MASS SPECTROMETRY [LARGE SCALE ANALYSIS]</scope>
</reference>
<reference key="5">
    <citation type="journal article" date="2012" name="Mol. Cell. Proteomics">
        <title>Comparative large-scale characterisation of plant vs. mammal proteins reveals similar and idiosyncratic N-alpha acetylation features.</title>
        <authorList>
            <person name="Bienvenut W.V."/>
            <person name="Sumpton D."/>
            <person name="Martinez A."/>
            <person name="Lilla S."/>
            <person name="Espagne C."/>
            <person name="Meinnel T."/>
            <person name="Giglione C."/>
        </authorList>
    </citation>
    <scope>ACETYLATION [LARGE SCALE ANALYSIS] AT ALA-2</scope>
    <scope>CLEAVAGE OF INITIATOR METHIONINE [LARGE SCALE ANALYSIS]</scope>
    <scope>IDENTIFICATION BY MASS SPECTROMETRY [LARGE SCALE ANALYSIS]</scope>
</reference>
<reference key="6">
    <citation type="journal article" date="2016" name="J. Biol. Chem.">
        <title>Selenoprotein gene nomenclature.</title>
        <authorList>
            <person name="Gladyshev V.N."/>
            <person name="Arner E.S."/>
            <person name="Berry M.J."/>
            <person name="Brigelius-Flohe R."/>
            <person name="Bruford E.A."/>
            <person name="Burk R.F."/>
            <person name="Carlson B.A."/>
            <person name="Castellano S."/>
            <person name="Chavatte L."/>
            <person name="Conrad M."/>
            <person name="Copeland P.R."/>
            <person name="Diamond A.M."/>
            <person name="Driscoll D.M."/>
            <person name="Ferreiro A."/>
            <person name="Flohe L."/>
            <person name="Green F.R."/>
            <person name="Guigo R."/>
            <person name="Handy D.E."/>
            <person name="Hatfield D.L."/>
            <person name="Hesketh J."/>
            <person name="Hoffmann P.R."/>
            <person name="Holmgren A."/>
            <person name="Hondal R.J."/>
            <person name="Howard M.T."/>
            <person name="Huang K."/>
            <person name="Kim H.Y."/>
            <person name="Kim I.Y."/>
            <person name="Koehrle J."/>
            <person name="Krol A."/>
            <person name="Kryukov G.V."/>
            <person name="Lee B.J."/>
            <person name="Lee B.C."/>
            <person name="Lei X.G."/>
            <person name="Liu Q."/>
            <person name="Lescure A."/>
            <person name="Lobanov A.V."/>
            <person name="Loscalzo J."/>
            <person name="Maiorino M."/>
            <person name="Mariotti M."/>
            <person name="Sandeep Prabhu K."/>
            <person name="Rayman M.P."/>
            <person name="Rozovsky S."/>
            <person name="Salinas G."/>
            <person name="Schmidt E.E."/>
            <person name="Schomburg L."/>
            <person name="Schweizer U."/>
            <person name="Simonovic M."/>
            <person name="Sunde R.A."/>
            <person name="Tsuji P.A."/>
            <person name="Tweedie S."/>
            <person name="Ursini F."/>
            <person name="Whanger P.D."/>
            <person name="Zhang Y."/>
        </authorList>
    </citation>
    <scope>NOMENCLATURE</scope>
</reference>
<reference key="7">
    <citation type="journal article" date="2017" name="Brain">
        <title>A mutation of EPT1 (SELENOI) underlies a new disorder of Kennedy pathway phospholipid biosynthesis.</title>
        <authorList>
            <person name="Ahmed M.Y."/>
            <person name="Al-Khayat A."/>
            <person name="Al-Murshedi F."/>
            <person name="Al-Futaisi A."/>
            <person name="Chioza B.A."/>
            <person name="Pedro Fernandez-Murray J."/>
            <person name="Self J.E."/>
            <person name="Salter C.G."/>
            <person name="Harlalka G.V."/>
            <person name="Rawlins L.E."/>
            <person name="Al-Zuhaibi S."/>
            <person name="Al-Azri F."/>
            <person name="Al-Rashdi F."/>
            <person name="Cazenave-Gassiot A."/>
            <person name="Wenk M.R."/>
            <person name="Al-Salmi F."/>
            <person name="Patton M.A."/>
            <person name="Silver D.L."/>
            <person name="Baple E.L."/>
            <person name="McMaster C.R."/>
            <person name="Crosby A.H."/>
        </authorList>
    </citation>
    <scope>INVOLVEMENT IN SPG81</scope>
    <scope>VARIANT SPG81 PRO-112</scope>
    <scope>CHARACTERIZATION OF VARIANT SPG81 PRO-112</scope>
    <scope>FUNCTION</scope>
    <scope>CATALYTIC ACTIVITY</scope>
    <scope>PATHWAY</scope>
    <scope>SUBCELLULAR LOCATION</scope>
    <scope>TOPOLOGY</scope>
</reference>
<reference key="8">
    <citation type="journal article" date="2018" name="J. Lipid Res.">
        <title>EPT1 (selenoprotein I) is critical for the neural development and maintenance of plasmalogen in humans.</title>
        <authorList>
            <person name="Horibata Y."/>
            <person name="Elpeleg O."/>
            <person name="Eran A."/>
            <person name="Hirabayashi Y."/>
            <person name="Savitzki D."/>
            <person name="Tal G."/>
            <person name="Mandel H."/>
            <person name="Sugimoto H."/>
        </authorList>
    </citation>
    <scope>INVOLVEMENT IN SPG81</scope>
    <scope>CATALYTIC ACTIVITY</scope>
    <scope>FUNCTION</scope>
    <scope>PATHWAY</scope>
</reference>
<reference key="9">
    <citation type="journal article" date="2023" name="J. Gene Med.">
        <title>A novel homozygous synonymous splicing variant in SELENOI gene causes spastic paraplegia 81.</title>
        <authorList>
            <person name="Sarma A.S."/>
            <person name="Siddardha B."/>
            <person name="T P.L."/>
            <person name="Ranganath P."/>
            <person name="Dalal A."/>
        </authorList>
    </citation>
    <scope>INVOLVEMENT IN SPG81</scope>
</reference>
<dbReference type="EC" id="2.7.8.1" evidence="3 4 5"/>
<dbReference type="EMBL" id="BK001426">
    <property type="protein sequence ID" value="DAA01514.1"/>
    <property type="molecule type" value="mRNA"/>
</dbReference>
<dbReference type="EMBL" id="AB051511">
    <property type="protein sequence ID" value="BAB21815.1"/>
    <property type="status" value="ALT_SEQ"/>
    <property type="molecule type" value="mRNA"/>
</dbReference>
<dbReference type="CCDS" id="CCDS46240.1"/>
<dbReference type="RefSeq" id="NP_277040.1">
    <property type="nucleotide sequence ID" value="NM_033505.4"/>
</dbReference>
<dbReference type="BioGRID" id="124549">
    <property type="interactions" value="33"/>
</dbReference>
<dbReference type="FunCoup" id="Q9C0D9">
    <property type="interactions" value="1281"/>
</dbReference>
<dbReference type="IntAct" id="Q9C0D9">
    <property type="interactions" value="10"/>
</dbReference>
<dbReference type="STRING" id="9606.ENSP00000260585"/>
<dbReference type="iPTMnet" id="Q9C0D9"/>
<dbReference type="PhosphoSitePlus" id="Q9C0D9"/>
<dbReference type="SwissPalm" id="Q9C0D9"/>
<dbReference type="BioMuta" id="SELENOI"/>
<dbReference type="DMDM" id="172046233"/>
<dbReference type="jPOST" id="Q9C0D9"/>
<dbReference type="MassIVE" id="Q9C0D9"/>
<dbReference type="PaxDb" id="9606-ENSP00000260585"/>
<dbReference type="PeptideAtlas" id="Q9C0D9"/>
<dbReference type="ProteomicsDB" id="80018"/>
<dbReference type="Pumba" id="Q9C0D9"/>
<dbReference type="Antibodypedia" id="60801">
    <property type="antibodies" value="15 antibodies from 7 providers"/>
</dbReference>
<dbReference type="DNASU" id="85465"/>
<dbReference type="Ensembl" id="ENST00000260585.12">
    <property type="protein sequence ID" value="ENSP00000260585.7"/>
    <property type="gene ID" value="ENSG00000138018.19"/>
</dbReference>
<dbReference type="GeneID" id="85465"/>
<dbReference type="KEGG" id="hsa:85465"/>
<dbReference type="MANE-Select" id="ENST00000260585.12">
    <property type="protein sequence ID" value="ENSP00000260585.7"/>
    <property type="RefSeq nucleotide sequence ID" value="NM_033505.4"/>
    <property type="RefSeq protein sequence ID" value="NP_277040.1"/>
</dbReference>
<dbReference type="UCSC" id="uc021veu.2">
    <property type="organism name" value="human"/>
</dbReference>
<dbReference type="AGR" id="HGNC:29361"/>
<dbReference type="CTD" id="85465"/>
<dbReference type="DisGeNET" id="85465"/>
<dbReference type="GeneCards" id="SELENOI"/>
<dbReference type="HGNC" id="HGNC:29361">
    <property type="gene designation" value="SELENOI"/>
</dbReference>
<dbReference type="HPA" id="ENSG00000138018">
    <property type="expression patterns" value="Low tissue specificity"/>
</dbReference>
<dbReference type="MalaCards" id="SELENOI"/>
<dbReference type="MIM" id="607915">
    <property type="type" value="gene"/>
</dbReference>
<dbReference type="MIM" id="618768">
    <property type="type" value="phenotype"/>
</dbReference>
<dbReference type="neXtProt" id="NX_Q9C0D9"/>
<dbReference type="OpenTargets" id="ENSG00000138018"/>
<dbReference type="Orphanet" id="506353">
    <property type="disease" value="Autosomal recessive complex spastic paraplegia due to Kennedy pathway dysfunction"/>
</dbReference>
<dbReference type="PharmGKB" id="PA165696581"/>
<dbReference type="VEuPathDB" id="HostDB:ENSG00000138018"/>
<dbReference type="eggNOG" id="KOG2877">
    <property type="taxonomic scope" value="Eukaryota"/>
</dbReference>
<dbReference type="GeneTree" id="ENSGT00950000183117"/>
<dbReference type="HOGENOM" id="CLU_035066_2_0_1"/>
<dbReference type="InParanoid" id="Q9C0D9"/>
<dbReference type="OMA" id="QNMGQGW"/>
<dbReference type="OrthoDB" id="196717at2759"/>
<dbReference type="PAN-GO" id="Q9C0D9">
    <property type="GO annotations" value="4 GO annotations based on evolutionary models"/>
</dbReference>
<dbReference type="PhylomeDB" id="Q9C0D9"/>
<dbReference type="TreeFam" id="TF313270"/>
<dbReference type="BioCyc" id="MetaCyc:HS06434-MONOMER"/>
<dbReference type="BRENDA" id="2.7.8.1">
    <property type="organism ID" value="2681"/>
</dbReference>
<dbReference type="PathwayCommons" id="Q9C0D9"/>
<dbReference type="Reactome" id="R-HSA-1483213">
    <property type="pathway name" value="Synthesis of PE"/>
</dbReference>
<dbReference type="SABIO-RK" id="Q9C0D9"/>
<dbReference type="SignaLink" id="Q9C0D9"/>
<dbReference type="UniPathway" id="UPA00558">
    <property type="reaction ID" value="UER00743"/>
</dbReference>
<dbReference type="BioGRID-ORCS" id="85465">
    <property type="hits" value="45 hits in 1168 CRISPR screens"/>
</dbReference>
<dbReference type="ChiTaRS" id="SELENOI">
    <property type="organism name" value="human"/>
</dbReference>
<dbReference type="GenomeRNAi" id="85465"/>
<dbReference type="Pharos" id="Q9C0D9">
    <property type="development level" value="Tbio"/>
</dbReference>
<dbReference type="PRO" id="PR:Q9C0D9"/>
<dbReference type="Proteomes" id="UP000005640">
    <property type="component" value="Chromosome 2"/>
</dbReference>
<dbReference type="RNAct" id="Q9C0D9">
    <property type="molecule type" value="protein"/>
</dbReference>
<dbReference type="Bgee" id="ENSG00000138018">
    <property type="expression patterns" value="Expressed in ileal mucosa and 167 other cell types or tissues"/>
</dbReference>
<dbReference type="ExpressionAtlas" id="Q9C0D9">
    <property type="expression patterns" value="baseline and differential"/>
</dbReference>
<dbReference type="GO" id="GO:0005789">
    <property type="term" value="C:endoplasmic reticulum membrane"/>
    <property type="evidence" value="ECO:0000314"/>
    <property type="project" value="UniProt"/>
</dbReference>
<dbReference type="GO" id="GO:0005794">
    <property type="term" value="C:Golgi apparatus"/>
    <property type="evidence" value="ECO:0000318"/>
    <property type="project" value="GO_Central"/>
</dbReference>
<dbReference type="GO" id="GO:0004307">
    <property type="term" value="F:ethanolaminephosphotransferase activity"/>
    <property type="evidence" value="ECO:0000314"/>
    <property type="project" value="HGNC"/>
</dbReference>
<dbReference type="GO" id="GO:0046872">
    <property type="term" value="F:metal ion binding"/>
    <property type="evidence" value="ECO:0007669"/>
    <property type="project" value="UniProtKB-KW"/>
</dbReference>
<dbReference type="GO" id="GO:0008611">
    <property type="term" value="P:ether lipid biosynthetic process"/>
    <property type="evidence" value="ECO:0000250"/>
    <property type="project" value="UniProt"/>
</dbReference>
<dbReference type="GO" id="GO:0042552">
    <property type="term" value="P:myelination"/>
    <property type="evidence" value="ECO:0000250"/>
    <property type="project" value="UniProt"/>
</dbReference>
<dbReference type="GO" id="GO:0006646">
    <property type="term" value="P:phosphatidylethanolamine biosynthetic process"/>
    <property type="evidence" value="ECO:0000314"/>
    <property type="project" value="HGNC"/>
</dbReference>
<dbReference type="FunFam" id="1.20.120.1760:FF:000006">
    <property type="entry name" value="Putative ethanolaminephosphotransferase 1"/>
    <property type="match status" value="1"/>
</dbReference>
<dbReference type="Gene3D" id="1.20.120.1760">
    <property type="match status" value="1"/>
</dbReference>
<dbReference type="InterPro" id="IPR000462">
    <property type="entry name" value="CDP-OH_P_trans"/>
</dbReference>
<dbReference type="InterPro" id="IPR043130">
    <property type="entry name" value="CDP-OH_PTrfase_TM_dom"/>
</dbReference>
<dbReference type="InterPro" id="IPR048254">
    <property type="entry name" value="CDP_ALCOHOL_P_TRANSF_CS"/>
</dbReference>
<dbReference type="InterPro" id="IPR014472">
    <property type="entry name" value="CHOPT"/>
</dbReference>
<dbReference type="PANTHER" id="PTHR10414">
    <property type="entry name" value="ETHANOLAMINEPHOSPHOTRANSFERASE"/>
    <property type="match status" value="1"/>
</dbReference>
<dbReference type="PANTHER" id="PTHR10414:SF47">
    <property type="entry name" value="ETHANOLAMINEPHOSPHOTRANSFERASE 1"/>
    <property type="match status" value="1"/>
</dbReference>
<dbReference type="Pfam" id="PF01066">
    <property type="entry name" value="CDP-OH_P_transf"/>
    <property type="match status" value="1"/>
</dbReference>
<dbReference type="PIRSF" id="PIRSF015665">
    <property type="entry name" value="CHOPT"/>
    <property type="match status" value="1"/>
</dbReference>
<dbReference type="PROSITE" id="PS00379">
    <property type="entry name" value="CDP_ALCOHOL_P_TRANSF"/>
    <property type="match status" value="1"/>
</dbReference>
<proteinExistence type="evidence at protein level"/>
<feature type="initiator methionine" description="Removed" evidence="14 15">
    <location>
        <position position="1"/>
    </location>
</feature>
<feature type="chain" id="PRO_0000056813" description="Ethanolaminephosphotransferase 1">
    <location>
        <begin position="2"/>
        <end position="397"/>
    </location>
</feature>
<feature type="transmembrane region" description="Helical" evidence="1">
    <location>
        <begin position="47"/>
        <end position="69"/>
    </location>
</feature>
<feature type="transmembrane region" description="Helical" evidence="1">
    <location>
        <begin position="84"/>
        <end position="103"/>
    </location>
</feature>
<feature type="transmembrane region" description="Helical" evidence="1">
    <location>
        <begin position="123"/>
        <end position="145"/>
    </location>
</feature>
<feature type="transmembrane region" description="Helical" evidence="1">
    <location>
        <begin position="150"/>
        <end position="172"/>
    </location>
</feature>
<feature type="transmembrane region" description="Helical" evidence="1">
    <location>
        <begin position="179"/>
        <end position="201"/>
    </location>
</feature>
<feature type="transmembrane region" description="Helical" evidence="1">
    <location>
        <begin position="221"/>
        <end position="243"/>
    </location>
</feature>
<feature type="transmembrane region" description="Helical" evidence="1">
    <location>
        <begin position="256"/>
        <end position="278"/>
    </location>
</feature>
<feature type="transmembrane region" description="Helical" evidence="1">
    <location>
        <begin position="291"/>
        <end position="310"/>
    </location>
</feature>
<feature type="transmembrane region" description="Helical" evidence="1">
    <location>
        <begin position="317"/>
        <end position="339"/>
    </location>
</feature>
<feature type="transmembrane region" description="Helical" evidence="1">
    <location>
        <begin position="344"/>
        <end position="366"/>
    </location>
</feature>
<feature type="non-standard amino acid" description="Selenocysteine" evidence="2">
    <location>
        <position position="387"/>
    </location>
</feature>
<feature type="modified residue" description="N-acetylalanine" evidence="14 15">
    <location>
        <position position="2"/>
    </location>
</feature>
<feature type="sequence variant" id="VAR_083878" description="In SPG81; loss of ethanolaminephosphotransferase activity; dbSNP:rs933233143." evidence="4">
    <original>R</original>
    <variation>P</variation>
    <location>
        <position position="112"/>
    </location>
</feature>
<evidence type="ECO:0000255" key="1"/>
<evidence type="ECO:0000269" key="2">
    <source>
    </source>
</evidence>
<evidence type="ECO:0000269" key="3">
    <source>
    </source>
</evidence>
<evidence type="ECO:0000269" key="4">
    <source>
    </source>
</evidence>
<evidence type="ECO:0000269" key="5">
    <source>
    </source>
</evidence>
<evidence type="ECO:0000269" key="6">
    <source>
    </source>
</evidence>
<evidence type="ECO:0000303" key="7">
    <source>
    </source>
</evidence>
<evidence type="ECO:0000305" key="8"/>
<evidence type="ECO:0000305" key="9">
    <source>
    </source>
</evidence>
<evidence type="ECO:0000305" key="10">
    <source>
    </source>
</evidence>
<evidence type="ECO:0000305" key="11">
    <source>
    </source>
</evidence>
<evidence type="ECO:0000312" key="12">
    <source>
        <dbReference type="EMBL" id="BAB21815.1"/>
    </source>
</evidence>
<evidence type="ECO:0000312" key="13">
    <source>
        <dbReference type="HGNC" id="HGNC:29361"/>
    </source>
</evidence>
<evidence type="ECO:0007744" key="14">
    <source>
    </source>
</evidence>
<evidence type="ECO:0007744" key="15">
    <source>
    </source>
</evidence>
<organism>
    <name type="scientific">Homo sapiens</name>
    <name type="common">Human</name>
    <dbReference type="NCBI Taxonomy" id="9606"/>
    <lineage>
        <taxon>Eukaryota</taxon>
        <taxon>Metazoa</taxon>
        <taxon>Chordata</taxon>
        <taxon>Craniata</taxon>
        <taxon>Vertebrata</taxon>
        <taxon>Euteleostomi</taxon>
        <taxon>Mammalia</taxon>
        <taxon>Eutheria</taxon>
        <taxon>Euarchontoglires</taxon>
        <taxon>Primates</taxon>
        <taxon>Haplorrhini</taxon>
        <taxon>Catarrhini</taxon>
        <taxon>Hominidae</taxon>
        <taxon>Homo</taxon>
    </lineage>
</organism>
<protein>
    <recommendedName>
        <fullName evidence="8">Ethanolaminephosphotransferase 1</fullName>
        <shortName>hEPT1</shortName>
        <ecNumber evidence="3 4 5">2.7.8.1</ecNumber>
    </recommendedName>
    <alternativeName>
        <fullName evidence="7 13">Selenoprotein I</fullName>
        <shortName evidence="7">SelI</shortName>
    </alternativeName>
</protein>
<keyword id="KW-0007">Acetylation</keyword>
<keyword id="KW-0225">Disease variant</keyword>
<keyword id="KW-0256">Endoplasmic reticulum</keyword>
<keyword id="KW-0890">Hereditary spastic paraplegia</keyword>
<keyword id="KW-0444">Lipid biosynthesis</keyword>
<keyword id="KW-0443">Lipid metabolism</keyword>
<keyword id="KW-0460">Magnesium</keyword>
<keyword id="KW-0464">Manganese</keyword>
<keyword id="KW-0472">Membrane</keyword>
<keyword id="KW-0479">Metal-binding</keyword>
<keyword id="KW-0523">Neurodegeneration</keyword>
<keyword id="KW-0594">Phospholipid biosynthesis</keyword>
<keyword id="KW-1208">Phospholipid metabolism</keyword>
<keyword id="KW-1267">Proteomics identification</keyword>
<keyword id="KW-1185">Reference proteome</keyword>
<keyword id="KW-0712">Selenocysteine</keyword>
<keyword id="KW-0808">Transferase</keyword>
<keyword id="KW-0812">Transmembrane</keyword>
<keyword id="KW-1133">Transmembrane helix</keyword>
<name>EPT1_HUMAN</name>
<accession>Q9C0D9</accession>
<accession>Q63ZE3</accession>
<gene>
    <name evidence="13" type="primary">SELENOI</name>
    <name evidence="7 13" type="synonym">EPT1</name>
    <name evidence="12" type="synonym">KIAA1724</name>
    <name evidence="7" type="synonym">SELI</name>
</gene>
<sequence>MAGYEYVSPEQLAGFDKYKYSAVDTNPLSLYVMHPFWNTIVKVFPTWLAPNLITFSGFLLVVFNFLLMAYFDPDFYASAPGHKHVPDWVWIVVGILNFVAYTLDGVDGKQARRTNSSTPLGELFDHGLDSWSCVYFVVTVYSIFGRGSTGVSVFVLYLLLWVVLFSFILSHWEKYNTGILFLPWGYDISQVTISFVYIVTAVVGVEAWYEPFLFNFLYRDLFTAMIIGCALCVTLPMSLLNFFRSYKNNTLKLNSVYEAMVPLFSPCLLFILSTAWILWSPSDILELHPRVFYFMVGTAFANSTCQLIVCQMSSTRCPTLNWLLVPLFLVVLVVNLGVASYVESILLYTLTTAFTLAHIHYGVRVVKQLSSHFQIYPFSLRKPNSDULGMEEKNIGL</sequence>
<comment type="function">
    <text evidence="3 4 5">Ethanolaminephosphotransferase that catalyzes the transfer of phosphoethanolamine (PE) from CDP-ethanolamine to lipid acceptors, the final step in the synthesis of PE via the 'Kennedy' pathway (PubMed:17132865, PubMed:28052917, PubMed:29500230). PE is the second most abundant phospholipid of membranes in mammals and is involved in various membrane-related cellular processes (PubMed:17132865). The enzyme is critical for the synthesis of several PE species and also catalyzes the synthesis of plasmanyl-PE, a lipid required for proper myelination and neurodevelopment, from 1-alkyl-2-acylglycerol (PubMed:29500230).</text>
</comment>
<comment type="catalytic activity">
    <reaction evidence="3 4 5">
        <text>CDP-ethanolamine + a 1,2-diacyl-sn-glycerol = a 1,2-diacyl-sn-glycero-3-phosphoethanolamine + CMP + H(+)</text>
        <dbReference type="Rhea" id="RHEA:32943"/>
        <dbReference type="ChEBI" id="CHEBI:15378"/>
        <dbReference type="ChEBI" id="CHEBI:17815"/>
        <dbReference type="ChEBI" id="CHEBI:57876"/>
        <dbReference type="ChEBI" id="CHEBI:60377"/>
        <dbReference type="ChEBI" id="CHEBI:64612"/>
        <dbReference type="EC" id="2.7.8.1"/>
    </reaction>
    <physiologicalReaction direction="left-to-right" evidence="3 4 5">
        <dbReference type="Rhea" id="RHEA:32944"/>
    </physiologicalReaction>
</comment>
<comment type="catalytic activity">
    <reaction evidence="11">
        <text>1-O-alkyl-2-acyl-sn-glycerol + CDP-ethanolamine = a 1-O-alkyl-2-acyl-sn-glycero-3-phosphoethanolamine + CMP + H(+)</text>
        <dbReference type="Rhea" id="RHEA:36187"/>
        <dbReference type="ChEBI" id="CHEBI:15378"/>
        <dbReference type="ChEBI" id="CHEBI:52595"/>
        <dbReference type="ChEBI" id="CHEBI:57876"/>
        <dbReference type="ChEBI" id="CHEBI:60377"/>
        <dbReference type="ChEBI" id="CHEBI:60520"/>
    </reaction>
    <physiologicalReaction direction="left-to-right" evidence="11">
        <dbReference type="Rhea" id="RHEA:36188"/>
    </physiologicalReaction>
</comment>
<comment type="cofactor">
    <cofactor evidence="3">
        <name>Mg(2+)</name>
        <dbReference type="ChEBI" id="CHEBI:18420"/>
    </cofactor>
    <cofactor evidence="3">
        <name>Mn(2+)</name>
        <dbReference type="ChEBI" id="CHEBI:29035"/>
    </cofactor>
</comment>
<comment type="biophysicochemical properties">
    <kinetics>
        <KM evidence="3">1.8 uM for CDP-ethanolamine</KM>
        <Vmax evidence="3">76.3 pmol/min/mg enzyme with CDP-ethanolamine as substrate</Vmax>
    </kinetics>
</comment>
<comment type="pathway">
    <text evidence="4 5">Phospholipid metabolism; phosphatidylethanolamine biosynthesis; phosphatidylethanolamine from ethanolamine: step 3/3.</text>
</comment>
<comment type="subcellular location">
    <subcellularLocation>
        <location evidence="9 10">Endoplasmic reticulum membrane</location>
        <topology evidence="10">Multi-pass membrane protein</topology>
    </subcellularLocation>
</comment>
<comment type="tissue specificity">
    <text evidence="3">Widely expressed. Abundant in brain, placenta, liver and pancreas, followed by heart, skeletal muscle, lung and kidney. In brain it is strongly expressed in cerebellum, followed by the occipital pole and the frontal lobe.</text>
</comment>
<comment type="disease" evidence="4 5 6">
    <disease id="DI-05755">
        <name>Spastic paraplegia 81, autosomal recessive</name>
        <acronym>SPG81</acronym>
        <description>A form of spastic paraplegia, a neurodegenerative disorder characterized by a slow, gradual, progressive weakness and spasticity of the lower limbs. Rate of progression and the severity of symptoms are quite variable. Initial symptoms may include difficulty with balance, weakness and stiffness in the legs, muscle spasms, and dragging the toes when walking. In some forms of the disorder, bladder symptoms (such as incontinence) may appear, or the weakness and stiffness may spread to other parts of the body. SPG81 is a complicated form characterized by white matter abnormalities, hypomyelination with progressive white matter loss, delayed motor development, progressive spasticity, and impaired intellectual development and speech delay. Additional features may include bifid uvula, microcephaly, seizures, and variable ocular anomalies.</description>
        <dbReference type="MIM" id="618768"/>
    </disease>
    <text>The disease is caused by variants affecting the gene represented in this entry.</text>
</comment>
<comment type="similarity">
    <text evidence="8">Belongs to the CDP-alcohol phosphatidyltransferase class-I family.</text>
</comment>
<comment type="sequence caution" evidence="8">
    <conflict type="erroneous termination">
        <sequence resource="EMBL-CDS" id="BAB21815"/>
    </conflict>
    <text>Truncated C-terminus.</text>
</comment>